<accession>A8EZA9</accession>
<proteinExistence type="inferred from homology"/>
<name>CAPD_RICCK</name>
<keyword id="KW-0413">Isomerase</keyword>
<keyword id="KW-0448">Lipopolysaccharide biosynthesis</keyword>
<evidence type="ECO:0000250" key="1"/>
<evidence type="ECO:0000305" key="2"/>
<organism>
    <name type="scientific">Rickettsia canadensis (strain McKiel)</name>
    <dbReference type="NCBI Taxonomy" id="293613"/>
    <lineage>
        <taxon>Bacteria</taxon>
        <taxon>Pseudomonadati</taxon>
        <taxon>Pseudomonadota</taxon>
        <taxon>Alphaproteobacteria</taxon>
        <taxon>Rickettsiales</taxon>
        <taxon>Rickettsiaceae</taxon>
        <taxon>Rickettsieae</taxon>
        <taxon>Rickettsia</taxon>
        <taxon>belli group</taxon>
    </lineage>
</organism>
<gene>
    <name type="primary">capD</name>
    <name type="ordered locus">A1E_03815</name>
</gene>
<dbReference type="EC" id="5.1.3.2"/>
<dbReference type="EMBL" id="CP000409">
    <property type="protein sequence ID" value="ABV73692.1"/>
    <property type="molecule type" value="Genomic_DNA"/>
</dbReference>
<dbReference type="RefSeq" id="WP_012148887.1">
    <property type="nucleotide sequence ID" value="NC_009879.1"/>
</dbReference>
<dbReference type="SMR" id="A8EZA9"/>
<dbReference type="STRING" id="293613.A1E_03815"/>
<dbReference type="KEGG" id="rcm:A1E_03815"/>
<dbReference type="eggNOG" id="COG1086">
    <property type="taxonomic scope" value="Bacteria"/>
</dbReference>
<dbReference type="HOGENOM" id="CLU_013560_4_1_5"/>
<dbReference type="Proteomes" id="UP000007056">
    <property type="component" value="Chromosome"/>
</dbReference>
<dbReference type="GO" id="GO:0003978">
    <property type="term" value="F:UDP-glucose 4-epimerase activity"/>
    <property type="evidence" value="ECO:0007669"/>
    <property type="project" value="UniProtKB-EC"/>
</dbReference>
<dbReference type="GO" id="GO:0009103">
    <property type="term" value="P:lipopolysaccharide biosynthetic process"/>
    <property type="evidence" value="ECO:0007669"/>
    <property type="project" value="UniProtKB-KW"/>
</dbReference>
<dbReference type="CDD" id="cd05237">
    <property type="entry name" value="UDP_invert_4-6DH_SDR_e"/>
    <property type="match status" value="1"/>
</dbReference>
<dbReference type="Gene3D" id="3.40.50.720">
    <property type="entry name" value="NAD(P)-binding Rossmann-like Domain"/>
    <property type="match status" value="1"/>
</dbReference>
<dbReference type="InterPro" id="IPR013692">
    <property type="entry name" value="CapD_C"/>
</dbReference>
<dbReference type="InterPro" id="IPR036291">
    <property type="entry name" value="NAD(P)-bd_dom_sf"/>
</dbReference>
<dbReference type="InterPro" id="IPR003869">
    <property type="entry name" value="Polysac_CapD-like"/>
</dbReference>
<dbReference type="InterPro" id="IPR051203">
    <property type="entry name" value="Polysaccharide_Synthase-Rel"/>
</dbReference>
<dbReference type="PANTHER" id="PTHR43318">
    <property type="entry name" value="UDP-N-ACETYLGLUCOSAMINE 4,6-DEHYDRATASE"/>
    <property type="match status" value="1"/>
</dbReference>
<dbReference type="PANTHER" id="PTHR43318:SF2">
    <property type="entry name" value="UDP-N-ACETYLGLUCOSAMINE 4,6-DEHYDRATASE (INVERTING)"/>
    <property type="match status" value="1"/>
</dbReference>
<dbReference type="Pfam" id="PF08485">
    <property type="entry name" value="Polysacc_syn_2C"/>
    <property type="match status" value="1"/>
</dbReference>
<dbReference type="Pfam" id="PF02719">
    <property type="entry name" value="Polysacc_synt_2"/>
    <property type="match status" value="1"/>
</dbReference>
<dbReference type="SUPFAM" id="SSF51735">
    <property type="entry name" value="NAD(P)-binding Rossmann-fold domains"/>
    <property type="match status" value="1"/>
</dbReference>
<sequence length="341" mass="38349">MFVDKTLMITGGTGSFGNAVLSRFIESDIINDIKEIRIFSRDEKKQEDMRIALSNPKLKFYIGDVRNYKSVDEAMHGVDYVFHAAALKQVPTCEFYPMEAINTNVLGAENVLSAAIKNKVAKVVVLSTDKAVYPVNVMGLSKALMEKLAIAKARMRSMNETVLCVTRYGNVMASRGSVIPLFINQIKQGKELTITEPSMTRFLMSLVDSVNLVLYAFEHGRQGDIFVQKSPASTIAVLAKALQDIFGSKNKIRFIGTRHGEKHYESLVSSEDMAKAEDLGDYYRIPMDGRDLNYAKYFVEGEKKVALLDDYTSHNTRRLNLEEVKELLLTLNYVQEELKNA</sequence>
<reference key="1">
    <citation type="submission" date="2007-09" db="EMBL/GenBank/DDBJ databases">
        <title>Complete genome sequence of Rickettsia canadensis.</title>
        <authorList>
            <person name="Madan A."/>
            <person name="Fahey J."/>
            <person name="Helton E."/>
            <person name="Ketteman M."/>
            <person name="Madan A."/>
            <person name="Rodrigues S."/>
            <person name="Sanchez A."/>
            <person name="Whiting M."/>
            <person name="Dasch G."/>
            <person name="Eremeeva M."/>
        </authorList>
    </citation>
    <scope>NUCLEOTIDE SEQUENCE [LARGE SCALE GENOMIC DNA]</scope>
    <source>
        <strain>McKiel</strain>
    </source>
</reference>
<feature type="chain" id="PRO_0000314602" description="UDP-glucose 4-epimerase">
    <location>
        <begin position="1"/>
        <end position="341"/>
    </location>
</feature>
<protein>
    <recommendedName>
        <fullName>UDP-glucose 4-epimerase</fullName>
        <ecNumber>5.1.3.2</ecNumber>
    </recommendedName>
    <alternativeName>
        <fullName>Galactowaldenase</fullName>
    </alternativeName>
    <alternativeName>
        <fullName>UDP-galactose 4-epimerase</fullName>
    </alternativeName>
</protein>
<comment type="function">
    <text evidence="1">Epimerizes UDP-galactose to UDP-glucose.</text>
</comment>
<comment type="catalytic activity">
    <reaction>
        <text>UDP-alpha-D-glucose = UDP-alpha-D-galactose</text>
        <dbReference type="Rhea" id="RHEA:22168"/>
        <dbReference type="ChEBI" id="CHEBI:58885"/>
        <dbReference type="ChEBI" id="CHEBI:66914"/>
        <dbReference type="EC" id="5.1.3.2"/>
    </reaction>
</comment>
<comment type="similarity">
    <text evidence="2">Belongs to the polysaccharide synthase family.</text>
</comment>